<accession>B2UPK5</accession>
<evidence type="ECO:0000255" key="1">
    <source>
        <dbReference type="HAMAP-Rule" id="MF_00379"/>
    </source>
</evidence>
<name>MNME_AKKM8</name>
<proteinExistence type="inferred from homology"/>
<gene>
    <name evidence="1" type="primary">mnmE</name>
    <name evidence="1" type="synonym">trmE</name>
    <name type="ordered locus">Amuc_0645</name>
</gene>
<dbReference type="EC" id="3.6.-.-" evidence="1"/>
<dbReference type="EMBL" id="CP001071">
    <property type="protein sequence ID" value="ACD04482.1"/>
    <property type="molecule type" value="Genomic_DNA"/>
</dbReference>
<dbReference type="RefSeq" id="WP_012419697.1">
    <property type="nucleotide sequence ID" value="NC_010655.1"/>
</dbReference>
<dbReference type="SMR" id="B2UPK5"/>
<dbReference type="STRING" id="349741.Amuc_0645"/>
<dbReference type="PaxDb" id="349741-Amuc_0645"/>
<dbReference type="KEGG" id="amu:Amuc_0645"/>
<dbReference type="eggNOG" id="COG0486">
    <property type="taxonomic scope" value="Bacteria"/>
</dbReference>
<dbReference type="HOGENOM" id="CLU_019624_4_1_0"/>
<dbReference type="OrthoDB" id="9805918at2"/>
<dbReference type="BioCyc" id="AMUC349741:G1GBX-703-MONOMER"/>
<dbReference type="Proteomes" id="UP000001031">
    <property type="component" value="Chromosome"/>
</dbReference>
<dbReference type="GO" id="GO:0005737">
    <property type="term" value="C:cytoplasm"/>
    <property type="evidence" value="ECO:0007669"/>
    <property type="project" value="UniProtKB-SubCell"/>
</dbReference>
<dbReference type="GO" id="GO:0005525">
    <property type="term" value="F:GTP binding"/>
    <property type="evidence" value="ECO:0007669"/>
    <property type="project" value="UniProtKB-UniRule"/>
</dbReference>
<dbReference type="GO" id="GO:0003924">
    <property type="term" value="F:GTPase activity"/>
    <property type="evidence" value="ECO:0007669"/>
    <property type="project" value="UniProtKB-UniRule"/>
</dbReference>
<dbReference type="GO" id="GO:0046872">
    <property type="term" value="F:metal ion binding"/>
    <property type="evidence" value="ECO:0007669"/>
    <property type="project" value="UniProtKB-KW"/>
</dbReference>
<dbReference type="GO" id="GO:0030488">
    <property type="term" value="P:tRNA methylation"/>
    <property type="evidence" value="ECO:0007669"/>
    <property type="project" value="TreeGrafter"/>
</dbReference>
<dbReference type="GO" id="GO:0002098">
    <property type="term" value="P:tRNA wobble uridine modification"/>
    <property type="evidence" value="ECO:0007669"/>
    <property type="project" value="TreeGrafter"/>
</dbReference>
<dbReference type="CDD" id="cd04164">
    <property type="entry name" value="trmE"/>
    <property type="match status" value="1"/>
</dbReference>
<dbReference type="CDD" id="cd14858">
    <property type="entry name" value="TrmE_N"/>
    <property type="match status" value="1"/>
</dbReference>
<dbReference type="Gene3D" id="3.40.50.300">
    <property type="entry name" value="P-loop containing nucleotide triphosphate hydrolases"/>
    <property type="match status" value="1"/>
</dbReference>
<dbReference type="Gene3D" id="3.30.1360.120">
    <property type="entry name" value="Probable tRNA modification gtpase trme, domain 1"/>
    <property type="match status" value="1"/>
</dbReference>
<dbReference type="Gene3D" id="1.20.120.430">
    <property type="entry name" value="tRNA modification GTPase MnmE domain 2"/>
    <property type="match status" value="1"/>
</dbReference>
<dbReference type="HAMAP" id="MF_00379">
    <property type="entry name" value="GTPase_MnmE"/>
    <property type="match status" value="1"/>
</dbReference>
<dbReference type="InterPro" id="IPR031168">
    <property type="entry name" value="G_TrmE"/>
</dbReference>
<dbReference type="InterPro" id="IPR006073">
    <property type="entry name" value="GTP-bd"/>
</dbReference>
<dbReference type="InterPro" id="IPR018948">
    <property type="entry name" value="GTP-bd_TrmE_N"/>
</dbReference>
<dbReference type="InterPro" id="IPR004520">
    <property type="entry name" value="GTPase_MnmE"/>
</dbReference>
<dbReference type="InterPro" id="IPR027368">
    <property type="entry name" value="MnmE_dom2"/>
</dbReference>
<dbReference type="InterPro" id="IPR025867">
    <property type="entry name" value="MnmE_helical"/>
</dbReference>
<dbReference type="InterPro" id="IPR027417">
    <property type="entry name" value="P-loop_NTPase"/>
</dbReference>
<dbReference type="InterPro" id="IPR005225">
    <property type="entry name" value="Small_GTP-bd"/>
</dbReference>
<dbReference type="InterPro" id="IPR027266">
    <property type="entry name" value="TrmE/GcvT_dom1"/>
</dbReference>
<dbReference type="NCBIfam" id="TIGR00450">
    <property type="entry name" value="mnmE_trmE_thdF"/>
    <property type="match status" value="1"/>
</dbReference>
<dbReference type="NCBIfam" id="NF003661">
    <property type="entry name" value="PRK05291.1-3"/>
    <property type="match status" value="1"/>
</dbReference>
<dbReference type="NCBIfam" id="TIGR00231">
    <property type="entry name" value="small_GTP"/>
    <property type="match status" value="1"/>
</dbReference>
<dbReference type="PANTHER" id="PTHR42714">
    <property type="entry name" value="TRNA MODIFICATION GTPASE GTPBP3"/>
    <property type="match status" value="1"/>
</dbReference>
<dbReference type="PANTHER" id="PTHR42714:SF2">
    <property type="entry name" value="TRNA MODIFICATION GTPASE GTPBP3, MITOCHONDRIAL"/>
    <property type="match status" value="1"/>
</dbReference>
<dbReference type="Pfam" id="PF01926">
    <property type="entry name" value="MMR_HSR1"/>
    <property type="match status" value="1"/>
</dbReference>
<dbReference type="Pfam" id="PF12631">
    <property type="entry name" value="MnmE_helical"/>
    <property type="match status" value="1"/>
</dbReference>
<dbReference type="Pfam" id="PF10396">
    <property type="entry name" value="TrmE_N"/>
    <property type="match status" value="1"/>
</dbReference>
<dbReference type="SUPFAM" id="SSF52540">
    <property type="entry name" value="P-loop containing nucleoside triphosphate hydrolases"/>
    <property type="match status" value="1"/>
</dbReference>
<dbReference type="SUPFAM" id="SSF116878">
    <property type="entry name" value="TrmE connector domain"/>
    <property type="match status" value="1"/>
</dbReference>
<dbReference type="PROSITE" id="PS51709">
    <property type="entry name" value="G_TRME"/>
    <property type="match status" value="1"/>
</dbReference>
<keyword id="KW-0963">Cytoplasm</keyword>
<keyword id="KW-0342">GTP-binding</keyword>
<keyword id="KW-0378">Hydrolase</keyword>
<keyword id="KW-0460">Magnesium</keyword>
<keyword id="KW-0479">Metal-binding</keyword>
<keyword id="KW-0547">Nucleotide-binding</keyword>
<keyword id="KW-0630">Potassium</keyword>
<keyword id="KW-1185">Reference proteome</keyword>
<keyword id="KW-0819">tRNA processing</keyword>
<organism>
    <name type="scientific">Akkermansia muciniphila (strain ATCC BAA-835 / DSM 22959 / JCM 33894 / BCRC 81048 / CCUG 64013 / CIP 107961 / Muc)</name>
    <dbReference type="NCBI Taxonomy" id="349741"/>
    <lineage>
        <taxon>Bacteria</taxon>
        <taxon>Pseudomonadati</taxon>
        <taxon>Verrucomicrobiota</taxon>
        <taxon>Verrucomicrobiia</taxon>
        <taxon>Verrucomicrobiales</taxon>
        <taxon>Akkermansiaceae</taxon>
        <taxon>Akkermansia</taxon>
    </lineage>
</organism>
<sequence length="449" mass="47958">MTDPERTIAAQATAAGQGAIAVIRMSGPGCMDILKQCTPAAFTERLRPRRATLVCIRDAEGAAIDQALVTWFPAPASYTGEDTAEISCHGGMLVTDRLLKRLYQCGASPAEPGEFTKRAFLNGRMDLTQAEAVMDVISAGSDLALKAAQSQLDGGIGAQVDELKDNLVHVLAHIEAYIDFPDEDISPDTASDLLARLRNMEEKLDTLLKTAEGGRLLREGIRTAIAGPPNVGKSSLLNTLLGYDRAIVSNIAGTTRDTVEESIQLAGLALRLIDTAGVRESSDVIEQAGITRTNRALETADLVLEVADASTPRVKDFPAPVLTAPRLLILNKCDLGIHPDWKAVPGIRFSCATGEGRKELEEAIIQAFSSSLPGETGSSLVAINARHQHELGLCREHVRLASESISRQESPEFTALELREALTHLGEITGAVDTEDVLGAIFSSFCLGK</sequence>
<reference key="1">
    <citation type="journal article" date="2011" name="PLoS ONE">
        <title>The genome of Akkermansia muciniphila, a dedicated intestinal mucin degrader, and its use in exploring intestinal metagenomes.</title>
        <authorList>
            <person name="van Passel M.W."/>
            <person name="Kant R."/>
            <person name="Zoetendal E.G."/>
            <person name="Plugge C.M."/>
            <person name="Derrien M."/>
            <person name="Malfatti S.A."/>
            <person name="Chain P.S."/>
            <person name="Woyke T."/>
            <person name="Palva A."/>
            <person name="de Vos W.M."/>
            <person name="Smidt H."/>
        </authorList>
    </citation>
    <scope>NUCLEOTIDE SEQUENCE [LARGE SCALE GENOMIC DNA]</scope>
    <source>
        <strain>ATCC BAA-835 / DSM 22959 / JCM 33894 / BCRC 81048 / CCUG 64013 / CIP 107961 / Muc</strain>
    </source>
</reference>
<feature type="chain" id="PRO_1000122107" description="tRNA modification GTPase MnmE">
    <location>
        <begin position="1"/>
        <end position="449"/>
    </location>
</feature>
<feature type="domain" description="TrmE-type G">
    <location>
        <begin position="220"/>
        <end position="369"/>
    </location>
</feature>
<feature type="binding site" evidence="1">
    <location>
        <position position="24"/>
    </location>
    <ligand>
        <name>(6S)-5-formyl-5,6,7,8-tetrahydrofolate</name>
        <dbReference type="ChEBI" id="CHEBI:57457"/>
    </ligand>
</feature>
<feature type="binding site" evidence="1">
    <location>
        <position position="85"/>
    </location>
    <ligand>
        <name>(6S)-5-formyl-5,6,7,8-tetrahydrofolate</name>
        <dbReference type="ChEBI" id="CHEBI:57457"/>
    </ligand>
</feature>
<feature type="binding site" evidence="1">
    <location>
        <position position="124"/>
    </location>
    <ligand>
        <name>(6S)-5-formyl-5,6,7,8-tetrahydrofolate</name>
        <dbReference type="ChEBI" id="CHEBI:57457"/>
    </ligand>
</feature>
<feature type="binding site" evidence="1">
    <location>
        <begin position="230"/>
        <end position="235"/>
    </location>
    <ligand>
        <name>GTP</name>
        <dbReference type="ChEBI" id="CHEBI:37565"/>
    </ligand>
</feature>
<feature type="binding site" evidence="1">
    <location>
        <position position="230"/>
    </location>
    <ligand>
        <name>K(+)</name>
        <dbReference type="ChEBI" id="CHEBI:29103"/>
    </ligand>
</feature>
<feature type="binding site" evidence="1">
    <location>
        <position position="234"/>
    </location>
    <ligand>
        <name>Mg(2+)</name>
        <dbReference type="ChEBI" id="CHEBI:18420"/>
    </ligand>
</feature>
<feature type="binding site" evidence="1">
    <location>
        <begin position="249"/>
        <end position="255"/>
    </location>
    <ligand>
        <name>GTP</name>
        <dbReference type="ChEBI" id="CHEBI:37565"/>
    </ligand>
</feature>
<feature type="binding site" evidence="1">
    <location>
        <position position="249"/>
    </location>
    <ligand>
        <name>K(+)</name>
        <dbReference type="ChEBI" id="CHEBI:29103"/>
    </ligand>
</feature>
<feature type="binding site" evidence="1">
    <location>
        <position position="251"/>
    </location>
    <ligand>
        <name>K(+)</name>
        <dbReference type="ChEBI" id="CHEBI:29103"/>
    </ligand>
</feature>
<feature type="binding site" evidence="1">
    <location>
        <position position="254"/>
    </location>
    <ligand>
        <name>K(+)</name>
        <dbReference type="ChEBI" id="CHEBI:29103"/>
    </ligand>
</feature>
<feature type="binding site" evidence="1">
    <location>
        <position position="255"/>
    </location>
    <ligand>
        <name>Mg(2+)</name>
        <dbReference type="ChEBI" id="CHEBI:18420"/>
    </ligand>
</feature>
<feature type="binding site" evidence="1">
    <location>
        <begin position="274"/>
        <end position="277"/>
    </location>
    <ligand>
        <name>GTP</name>
        <dbReference type="ChEBI" id="CHEBI:37565"/>
    </ligand>
</feature>
<feature type="binding site" evidence="1">
    <location>
        <position position="449"/>
    </location>
    <ligand>
        <name>(6S)-5-formyl-5,6,7,8-tetrahydrofolate</name>
        <dbReference type="ChEBI" id="CHEBI:57457"/>
    </ligand>
</feature>
<comment type="function">
    <text evidence="1">Exhibits a very high intrinsic GTPase hydrolysis rate. Involved in the addition of a carboxymethylaminomethyl (cmnm) group at the wobble position (U34) of certain tRNAs, forming tRNA-cmnm(5)s(2)U34.</text>
</comment>
<comment type="cofactor">
    <cofactor evidence="1">
        <name>K(+)</name>
        <dbReference type="ChEBI" id="CHEBI:29103"/>
    </cofactor>
    <text evidence="1">Binds 1 potassium ion per subunit.</text>
</comment>
<comment type="subunit">
    <text evidence="1">Homodimer. Heterotetramer of two MnmE and two MnmG subunits.</text>
</comment>
<comment type="subcellular location">
    <subcellularLocation>
        <location evidence="1">Cytoplasm</location>
    </subcellularLocation>
</comment>
<comment type="similarity">
    <text evidence="1">Belongs to the TRAFAC class TrmE-Era-EngA-EngB-Septin-like GTPase superfamily. TrmE GTPase family.</text>
</comment>
<protein>
    <recommendedName>
        <fullName evidence="1">tRNA modification GTPase MnmE</fullName>
        <ecNumber evidence="1">3.6.-.-</ecNumber>
    </recommendedName>
</protein>